<feature type="chain" id="PRO_0000146274" description="Small ribosomal subunit protein uS12">
    <location>
        <begin position="1"/>
        <end position="123"/>
    </location>
</feature>
<feature type="region of interest" description="Disordered" evidence="2">
    <location>
        <begin position="104"/>
        <end position="123"/>
    </location>
</feature>
<feature type="compositionally biased region" description="Basic residues" evidence="2">
    <location>
        <begin position="113"/>
        <end position="123"/>
    </location>
</feature>
<accession>P66374</accession>
<accession>A1INZ8</accession>
<accession>Q9JQR6</accession>
<sequence>MPTINQLVRKGRQKPVYVNKVPALEACPQKRGVCTRVYTTTPKKPNSALRKVCKVRLTNGFEVISYIGGEGHNLQEHSVVLIRGGRVKDLPGVRYHTVRGSLDTAGVKDRKQARSKYGAKRPK</sequence>
<dbReference type="EMBL" id="AL157959">
    <property type="protein sequence ID" value="CAM07455.1"/>
    <property type="molecule type" value="Genomic_DNA"/>
</dbReference>
<dbReference type="RefSeq" id="WP_002218431.1">
    <property type="nucleotide sequence ID" value="NC_003116.1"/>
</dbReference>
<dbReference type="SMR" id="P66374"/>
<dbReference type="EnsemblBacteria" id="CAM07455">
    <property type="protein sequence ID" value="CAM07455"/>
    <property type="gene ID" value="NMA0137"/>
</dbReference>
<dbReference type="GeneID" id="94582015"/>
<dbReference type="KEGG" id="nma:NMA0137"/>
<dbReference type="HOGENOM" id="CLU_104295_1_2_4"/>
<dbReference type="Proteomes" id="UP000000626">
    <property type="component" value="Chromosome"/>
</dbReference>
<dbReference type="GO" id="GO:0015935">
    <property type="term" value="C:small ribosomal subunit"/>
    <property type="evidence" value="ECO:0007669"/>
    <property type="project" value="InterPro"/>
</dbReference>
<dbReference type="GO" id="GO:0019843">
    <property type="term" value="F:rRNA binding"/>
    <property type="evidence" value="ECO:0007669"/>
    <property type="project" value="UniProtKB-UniRule"/>
</dbReference>
<dbReference type="GO" id="GO:0003735">
    <property type="term" value="F:structural constituent of ribosome"/>
    <property type="evidence" value="ECO:0007669"/>
    <property type="project" value="InterPro"/>
</dbReference>
<dbReference type="GO" id="GO:0000049">
    <property type="term" value="F:tRNA binding"/>
    <property type="evidence" value="ECO:0007669"/>
    <property type="project" value="UniProtKB-UniRule"/>
</dbReference>
<dbReference type="GO" id="GO:0006412">
    <property type="term" value="P:translation"/>
    <property type="evidence" value="ECO:0007669"/>
    <property type="project" value="UniProtKB-UniRule"/>
</dbReference>
<dbReference type="CDD" id="cd03368">
    <property type="entry name" value="Ribosomal_S12"/>
    <property type="match status" value="1"/>
</dbReference>
<dbReference type="FunFam" id="2.40.50.140:FF:000001">
    <property type="entry name" value="30S ribosomal protein S12"/>
    <property type="match status" value="1"/>
</dbReference>
<dbReference type="Gene3D" id="2.40.50.140">
    <property type="entry name" value="Nucleic acid-binding proteins"/>
    <property type="match status" value="1"/>
</dbReference>
<dbReference type="HAMAP" id="MF_00403_B">
    <property type="entry name" value="Ribosomal_uS12_B"/>
    <property type="match status" value="1"/>
</dbReference>
<dbReference type="InterPro" id="IPR012340">
    <property type="entry name" value="NA-bd_OB-fold"/>
</dbReference>
<dbReference type="InterPro" id="IPR006032">
    <property type="entry name" value="Ribosomal_uS12"/>
</dbReference>
<dbReference type="InterPro" id="IPR005679">
    <property type="entry name" value="Ribosomal_uS12_bac"/>
</dbReference>
<dbReference type="NCBIfam" id="TIGR00981">
    <property type="entry name" value="rpsL_bact"/>
    <property type="match status" value="1"/>
</dbReference>
<dbReference type="PANTHER" id="PTHR11652">
    <property type="entry name" value="30S RIBOSOMAL PROTEIN S12 FAMILY MEMBER"/>
    <property type="match status" value="1"/>
</dbReference>
<dbReference type="Pfam" id="PF00164">
    <property type="entry name" value="Ribosom_S12_S23"/>
    <property type="match status" value="1"/>
</dbReference>
<dbReference type="PIRSF" id="PIRSF002133">
    <property type="entry name" value="Ribosomal_S12/S23"/>
    <property type="match status" value="1"/>
</dbReference>
<dbReference type="PRINTS" id="PR01034">
    <property type="entry name" value="RIBOSOMALS12"/>
</dbReference>
<dbReference type="SUPFAM" id="SSF50249">
    <property type="entry name" value="Nucleic acid-binding proteins"/>
    <property type="match status" value="1"/>
</dbReference>
<dbReference type="PROSITE" id="PS00055">
    <property type="entry name" value="RIBOSOMAL_S12"/>
    <property type="match status" value="1"/>
</dbReference>
<evidence type="ECO:0000255" key="1">
    <source>
        <dbReference type="HAMAP-Rule" id="MF_00403"/>
    </source>
</evidence>
<evidence type="ECO:0000256" key="2">
    <source>
        <dbReference type="SAM" id="MobiDB-lite"/>
    </source>
</evidence>
<evidence type="ECO:0000305" key="3"/>
<gene>
    <name evidence="1" type="primary">rpsL</name>
    <name type="ordered locus">NMA0137</name>
</gene>
<organism>
    <name type="scientific">Neisseria meningitidis serogroup A / serotype 4A (strain DSM 15465 / Z2491)</name>
    <dbReference type="NCBI Taxonomy" id="122587"/>
    <lineage>
        <taxon>Bacteria</taxon>
        <taxon>Pseudomonadati</taxon>
        <taxon>Pseudomonadota</taxon>
        <taxon>Betaproteobacteria</taxon>
        <taxon>Neisseriales</taxon>
        <taxon>Neisseriaceae</taxon>
        <taxon>Neisseria</taxon>
    </lineage>
</organism>
<name>RS12_NEIMA</name>
<proteinExistence type="inferred from homology"/>
<protein>
    <recommendedName>
        <fullName evidence="1">Small ribosomal subunit protein uS12</fullName>
    </recommendedName>
    <alternativeName>
        <fullName evidence="3">30S ribosomal protein S12</fullName>
    </alternativeName>
</protein>
<comment type="function">
    <text evidence="1">With S4 and S5 plays an important role in translational accuracy.</text>
</comment>
<comment type="function">
    <text evidence="1">Interacts with and stabilizes bases of the 16S rRNA that are involved in tRNA selection in the A site and with the mRNA backbone. Located at the interface of the 30S and 50S subunits, it traverses the body of the 30S subunit contacting proteins on the other side and probably holding the rRNA structure together. The combined cluster of proteins S8, S12 and S17 appears to hold together the shoulder and platform of the 30S subunit.</text>
</comment>
<comment type="subunit">
    <text evidence="1">Part of the 30S ribosomal subunit. Contacts proteins S8 and S17. May interact with IF1 in the 30S initiation complex.</text>
</comment>
<comment type="similarity">
    <text evidence="1">Belongs to the universal ribosomal protein uS12 family.</text>
</comment>
<comment type="caution">
    <text evidence="3">Because the enzyme that would modify Asp-89 to 3-methylthioaspartic acid has not been found in the proteome of this organism, that modification is not predicted.</text>
</comment>
<reference key="1">
    <citation type="journal article" date="2000" name="Nature">
        <title>Complete DNA sequence of a serogroup A strain of Neisseria meningitidis Z2491.</title>
        <authorList>
            <person name="Parkhill J."/>
            <person name="Achtman M."/>
            <person name="James K.D."/>
            <person name="Bentley S.D."/>
            <person name="Churcher C.M."/>
            <person name="Klee S.R."/>
            <person name="Morelli G."/>
            <person name="Basham D."/>
            <person name="Brown D."/>
            <person name="Chillingworth T."/>
            <person name="Davies R.M."/>
            <person name="Davis P."/>
            <person name="Devlin K."/>
            <person name="Feltwell T."/>
            <person name="Hamlin N."/>
            <person name="Holroyd S."/>
            <person name="Jagels K."/>
            <person name="Leather S."/>
            <person name="Moule S."/>
            <person name="Mungall K.L."/>
            <person name="Quail M.A."/>
            <person name="Rajandream M.A."/>
            <person name="Rutherford K.M."/>
            <person name="Simmonds M."/>
            <person name="Skelton J."/>
            <person name="Whitehead S."/>
            <person name="Spratt B.G."/>
            <person name="Barrell B.G."/>
        </authorList>
    </citation>
    <scope>NUCLEOTIDE SEQUENCE [LARGE SCALE GENOMIC DNA]</scope>
    <source>
        <strain>DSM 15465 / Z2491</strain>
    </source>
</reference>
<keyword id="KW-0687">Ribonucleoprotein</keyword>
<keyword id="KW-0689">Ribosomal protein</keyword>
<keyword id="KW-0694">RNA-binding</keyword>
<keyword id="KW-0699">rRNA-binding</keyword>
<keyword id="KW-0820">tRNA-binding</keyword>